<evidence type="ECO:0000255" key="1">
    <source>
        <dbReference type="HAMAP-Rule" id="MF_00361"/>
    </source>
</evidence>
<name>NADK_TREPA</name>
<accession>O83455</accession>
<comment type="function">
    <text evidence="1">Involved in the regulation of the intracellular balance of NAD and NADP, and is a key enzyme in the biosynthesis of NADP. Catalyzes specifically the phosphorylation on 2'-hydroxyl of the adenosine moiety of NAD to yield NADP.</text>
</comment>
<comment type="catalytic activity">
    <reaction evidence="1">
        <text>NAD(+) + ATP = ADP + NADP(+) + H(+)</text>
        <dbReference type="Rhea" id="RHEA:18629"/>
        <dbReference type="ChEBI" id="CHEBI:15378"/>
        <dbReference type="ChEBI" id="CHEBI:30616"/>
        <dbReference type="ChEBI" id="CHEBI:57540"/>
        <dbReference type="ChEBI" id="CHEBI:58349"/>
        <dbReference type="ChEBI" id="CHEBI:456216"/>
        <dbReference type="EC" id="2.7.1.23"/>
    </reaction>
</comment>
<comment type="cofactor">
    <cofactor evidence="1">
        <name>a divalent metal cation</name>
        <dbReference type="ChEBI" id="CHEBI:60240"/>
    </cofactor>
</comment>
<comment type="subcellular location">
    <subcellularLocation>
        <location evidence="1">Cytoplasm</location>
    </subcellularLocation>
</comment>
<comment type="similarity">
    <text evidence="1">Belongs to the NAD kinase family.</text>
</comment>
<gene>
    <name evidence="1" type="primary">nadK</name>
    <name type="ordered locus">TP_0441</name>
</gene>
<reference key="1">
    <citation type="journal article" date="1998" name="Science">
        <title>Complete genome sequence of Treponema pallidum, the syphilis spirochete.</title>
        <authorList>
            <person name="Fraser C.M."/>
            <person name="Norris S.J."/>
            <person name="Weinstock G.M."/>
            <person name="White O."/>
            <person name="Sutton G.G."/>
            <person name="Dodson R.J."/>
            <person name="Gwinn M.L."/>
            <person name="Hickey E.K."/>
            <person name="Clayton R.A."/>
            <person name="Ketchum K.A."/>
            <person name="Sodergren E."/>
            <person name="Hardham J.M."/>
            <person name="McLeod M.P."/>
            <person name="Salzberg S.L."/>
            <person name="Peterson J.D."/>
            <person name="Khalak H.G."/>
            <person name="Richardson D.L."/>
            <person name="Howell J.K."/>
            <person name="Chidambaram M."/>
            <person name="Utterback T.R."/>
            <person name="McDonald L.A."/>
            <person name="Artiach P."/>
            <person name="Bowman C."/>
            <person name="Cotton M.D."/>
            <person name="Fujii C."/>
            <person name="Garland S.A."/>
            <person name="Hatch B."/>
            <person name="Horst K."/>
            <person name="Roberts K.M."/>
            <person name="Sandusky M."/>
            <person name="Weidman J.F."/>
            <person name="Smith H.O."/>
            <person name="Venter J.C."/>
        </authorList>
    </citation>
    <scope>NUCLEOTIDE SEQUENCE [LARGE SCALE GENOMIC DNA]</scope>
    <source>
        <strain>Nichols</strain>
    </source>
</reference>
<organism>
    <name type="scientific">Treponema pallidum (strain Nichols)</name>
    <dbReference type="NCBI Taxonomy" id="243276"/>
    <lineage>
        <taxon>Bacteria</taxon>
        <taxon>Pseudomonadati</taxon>
        <taxon>Spirochaetota</taxon>
        <taxon>Spirochaetia</taxon>
        <taxon>Spirochaetales</taxon>
        <taxon>Treponemataceae</taxon>
        <taxon>Treponema</taxon>
    </lineage>
</organism>
<feature type="chain" id="PRO_0000120682" description="NAD kinase">
    <location>
        <begin position="1"/>
        <end position="305"/>
    </location>
</feature>
<feature type="active site" description="Proton acceptor" evidence="1">
    <location>
        <position position="76"/>
    </location>
</feature>
<feature type="binding site" evidence="1">
    <location>
        <begin position="76"/>
        <end position="77"/>
    </location>
    <ligand>
        <name>NAD(+)</name>
        <dbReference type="ChEBI" id="CHEBI:57540"/>
    </ligand>
</feature>
<feature type="binding site" evidence="1">
    <location>
        <begin position="150"/>
        <end position="151"/>
    </location>
    <ligand>
        <name>NAD(+)</name>
        <dbReference type="ChEBI" id="CHEBI:57540"/>
    </ligand>
</feature>
<feature type="binding site" evidence="1">
    <location>
        <position position="161"/>
    </location>
    <ligand>
        <name>NAD(+)</name>
        <dbReference type="ChEBI" id="CHEBI:57540"/>
    </ligand>
</feature>
<feature type="binding site" evidence="1">
    <location>
        <position position="180"/>
    </location>
    <ligand>
        <name>NAD(+)</name>
        <dbReference type="ChEBI" id="CHEBI:57540"/>
    </ligand>
</feature>
<sequence>MSSRVCPQRPVAKSSGDAKVLLIVSTYKPRAAVLAADVVNFLSIRGFQCHTIEYDGLNKESCARAGYMFAVSIGGDGTTLFAARCASPSGIPILAINLGRFGFIAPIEPRYWQQALSDYLAGGVRPAERALISCTVTRAGKEIASCLALNDVVLSSGRVARLTRAEVCFNDISFGVYEADGIILATPTGSTAYSAACGGPILDPDLDAFVLTPISALCLSNRPVVVPSSGVVRIKVLSMRHKETVLSVDGHELCTLQEEDQLLASRSSCSARLVFCTPHVFYHALCSKLAWSGSIFSRRGRRHDD</sequence>
<protein>
    <recommendedName>
        <fullName evidence="1">NAD kinase</fullName>
        <ecNumber evidence="1">2.7.1.23</ecNumber>
    </recommendedName>
    <alternativeName>
        <fullName evidence="1">ATP-dependent NAD kinase</fullName>
    </alternativeName>
</protein>
<keyword id="KW-0067">ATP-binding</keyword>
<keyword id="KW-0963">Cytoplasm</keyword>
<keyword id="KW-0418">Kinase</keyword>
<keyword id="KW-0520">NAD</keyword>
<keyword id="KW-0521">NADP</keyword>
<keyword id="KW-0547">Nucleotide-binding</keyword>
<keyword id="KW-1185">Reference proteome</keyword>
<keyword id="KW-0808">Transferase</keyword>
<dbReference type="EC" id="2.7.1.23" evidence="1"/>
<dbReference type="EMBL" id="AE000520">
    <property type="protein sequence ID" value="AAC65428.1"/>
    <property type="molecule type" value="Genomic_DNA"/>
</dbReference>
<dbReference type="PIR" id="A71324">
    <property type="entry name" value="A71324"/>
</dbReference>
<dbReference type="RefSeq" id="WP_010881889.1">
    <property type="nucleotide sequence ID" value="NC_021490.2"/>
</dbReference>
<dbReference type="SMR" id="O83455"/>
<dbReference type="IntAct" id="O83455">
    <property type="interactions" value="1"/>
</dbReference>
<dbReference type="STRING" id="243276.TP_0441"/>
<dbReference type="EnsemblBacteria" id="AAC65428">
    <property type="protein sequence ID" value="AAC65428"/>
    <property type="gene ID" value="TP_0441"/>
</dbReference>
<dbReference type="KEGG" id="tpa:TP_0441"/>
<dbReference type="KEGG" id="tpw:TPANIC_0441"/>
<dbReference type="eggNOG" id="COG0061">
    <property type="taxonomic scope" value="Bacteria"/>
</dbReference>
<dbReference type="HOGENOM" id="CLU_008831_0_0_12"/>
<dbReference type="OrthoDB" id="9774737at2"/>
<dbReference type="Proteomes" id="UP000000811">
    <property type="component" value="Chromosome"/>
</dbReference>
<dbReference type="GO" id="GO:0005737">
    <property type="term" value="C:cytoplasm"/>
    <property type="evidence" value="ECO:0007669"/>
    <property type="project" value="UniProtKB-SubCell"/>
</dbReference>
<dbReference type="GO" id="GO:0005524">
    <property type="term" value="F:ATP binding"/>
    <property type="evidence" value="ECO:0007669"/>
    <property type="project" value="UniProtKB-KW"/>
</dbReference>
<dbReference type="GO" id="GO:0046872">
    <property type="term" value="F:metal ion binding"/>
    <property type="evidence" value="ECO:0007669"/>
    <property type="project" value="UniProtKB-UniRule"/>
</dbReference>
<dbReference type="GO" id="GO:0051287">
    <property type="term" value="F:NAD binding"/>
    <property type="evidence" value="ECO:0007669"/>
    <property type="project" value="UniProtKB-ARBA"/>
</dbReference>
<dbReference type="GO" id="GO:0003951">
    <property type="term" value="F:NAD+ kinase activity"/>
    <property type="evidence" value="ECO:0007669"/>
    <property type="project" value="UniProtKB-UniRule"/>
</dbReference>
<dbReference type="GO" id="GO:0019674">
    <property type="term" value="P:NAD metabolic process"/>
    <property type="evidence" value="ECO:0007669"/>
    <property type="project" value="InterPro"/>
</dbReference>
<dbReference type="GO" id="GO:0006741">
    <property type="term" value="P:NADP biosynthetic process"/>
    <property type="evidence" value="ECO:0007669"/>
    <property type="project" value="UniProtKB-UniRule"/>
</dbReference>
<dbReference type="Gene3D" id="3.40.50.10330">
    <property type="entry name" value="Probable inorganic polyphosphate/atp-NAD kinase, domain 1"/>
    <property type="match status" value="1"/>
</dbReference>
<dbReference type="Gene3D" id="2.60.200.30">
    <property type="entry name" value="Probable inorganic polyphosphate/atp-NAD kinase, domain 2"/>
    <property type="match status" value="1"/>
</dbReference>
<dbReference type="HAMAP" id="MF_00361">
    <property type="entry name" value="NAD_kinase"/>
    <property type="match status" value="1"/>
</dbReference>
<dbReference type="InterPro" id="IPR017438">
    <property type="entry name" value="ATP-NAD_kinase_N"/>
</dbReference>
<dbReference type="InterPro" id="IPR017437">
    <property type="entry name" value="ATP-NAD_kinase_PpnK-typ_C"/>
</dbReference>
<dbReference type="InterPro" id="IPR016064">
    <property type="entry name" value="NAD/diacylglycerol_kinase_sf"/>
</dbReference>
<dbReference type="InterPro" id="IPR002504">
    <property type="entry name" value="NADK"/>
</dbReference>
<dbReference type="PANTHER" id="PTHR20275">
    <property type="entry name" value="NAD KINASE"/>
    <property type="match status" value="1"/>
</dbReference>
<dbReference type="PANTHER" id="PTHR20275:SF0">
    <property type="entry name" value="NAD KINASE"/>
    <property type="match status" value="1"/>
</dbReference>
<dbReference type="Pfam" id="PF01513">
    <property type="entry name" value="NAD_kinase"/>
    <property type="match status" value="1"/>
</dbReference>
<dbReference type="Pfam" id="PF20143">
    <property type="entry name" value="NAD_kinase_C"/>
    <property type="match status" value="1"/>
</dbReference>
<dbReference type="SUPFAM" id="SSF111331">
    <property type="entry name" value="NAD kinase/diacylglycerol kinase-like"/>
    <property type="match status" value="1"/>
</dbReference>
<proteinExistence type="inferred from homology"/>